<keyword id="KW-1072">Activation of host autophagy by virus</keyword>
<keyword id="KW-0067">ATP-binding</keyword>
<keyword id="KW-0167">Capsid protein</keyword>
<keyword id="KW-0191">Covalent protein-RNA linkage</keyword>
<keyword id="KW-0235">DNA replication</keyword>
<keyword id="KW-1262">Eukaryotic host gene expression shutoff by virus</keyword>
<keyword id="KW-1193">Eukaryotic host translation shutoff by virus</keyword>
<keyword id="KW-0347">Helicase</keyword>
<keyword id="KW-1035">Host cytoplasm</keyword>
<keyword id="KW-1036">Host cytoplasmic vesicle</keyword>
<keyword id="KW-1190">Host gene expression shutoff by virus</keyword>
<keyword id="KW-1043">Host membrane</keyword>
<keyword id="KW-1192">Host mRNA suppression by virus</keyword>
<keyword id="KW-1048">Host nucleus</keyword>
<keyword id="KW-0945">Host-virus interaction</keyword>
<keyword id="KW-0378">Hydrolase</keyword>
<keyword id="KW-1090">Inhibition of host innate immune response by virus</keyword>
<keyword id="KW-1099">Inhibition of host mRNA nuclear export by virus</keyword>
<keyword id="KW-1088">Inhibition of host RIG-I by virus</keyword>
<keyword id="KW-1113">Inhibition of host RLR pathway by virus</keyword>
<keyword id="KW-0407">Ion channel</keyword>
<keyword id="KW-0406">Ion transport</keyword>
<keyword id="KW-0449">Lipoprotein</keyword>
<keyword id="KW-0460">Magnesium</keyword>
<keyword id="KW-0472">Membrane</keyword>
<keyword id="KW-0479">Metal-binding</keyword>
<keyword id="KW-0519">Myristate</keyword>
<keyword id="KW-0547">Nucleotide-binding</keyword>
<keyword id="KW-0548">Nucleotidyltransferase</keyword>
<keyword id="KW-0597">Phosphoprotein</keyword>
<keyword id="KW-1172">Pore-mediated penetration of viral genome into host cell</keyword>
<keyword id="KW-0645">Protease</keyword>
<keyword id="KW-0677">Repeat</keyword>
<keyword id="KW-0694">RNA-binding</keyword>
<keyword id="KW-0696">RNA-directed RNA polymerase</keyword>
<keyword id="KW-1143">T=pseudo3 icosahedral capsid protein</keyword>
<keyword id="KW-0788">Thiol protease</keyword>
<keyword id="KW-0808">Transferase</keyword>
<keyword id="KW-0813">Transport</keyword>
<keyword id="KW-1161">Viral attachment to host cell</keyword>
<keyword id="KW-0899">Viral immunoevasion</keyword>
<keyword id="KW-1182">Viral ion channel</keyword>
<keyword id="KW-1162">Viral penetration into host cytoplasm</keyword>
<keyword id="KW-0693">Viral RNA replication</keyword>
<keyword id="KW-0946">Virion</keyword>
<keyword id="KW-1164">Virus endocytosis by host</keyword>
<keyword id="KW-1160">Virus entry into host cell</keyword>
<keyword id="KW-0862">Zinc</keyword>
<keyword id="KW-0863">Zinc-finger</keyword>
<organismHost>
    <name type="scientific">Homo sapiens</name>
    <name type="common">Human</name>
    <dbReference type="NCBI Taxonomy" id="9606"/>
</organismHost>
<proteinExistence type="evidence at protein level"/>
<name>POLG_CXB5P</name>
<organism>
    <name type="scientific">Coxsackievirus B5 (strain Peterborough / 1954/UK/85)</name>
    <dbReference type="NCBI Taxonomy" id="103907"/>
    <lineage>
        <taxon>Viruses</taxon>
        <taxon>Riboviria</taxon>
        <taxon>Orthornavirae</taxon>
        <taxon>Pisuviricota</taxon>
        <taxon>Pisoniviricetes</taxon>
        <taxon>Picornavirales</taxon>
        <taxon>Picornaviridae</taxon>
        <taxon>Ensavirinae</taxon>
        <taxon>Enterovirus</taxon>
        <taxon>Enterovirus B</taxon>
    </lineage>
</organism>
<comment type="function">
    <molecule>Capsid protein VP1</molecule>
    <text evidence="2 5">Forms an icosahedral capsid of pseudo T=3 symmetry with capsid proteins VP2 and VP3 (By similarity). The capsid is 300 Angstroms in diameter, composed of 60 copies of each capsid protein and enclosing the viral positive strand RNA genome (By similarity). Capsid protein VP1 mainly forms the vertices of the capsid (By similarity). Capsid protein VP1 interacts with host cell receptor to provide virion attachment to target host cells (By similarity). This attachment induces virion internalization (By similarity). Tyrosine kinases are probably involved in the entry process (By similarity). After binding to its receptor, the capsid undergoes conformational changes (By similarity). Capsid protein VP1 N-terminus (that contains an amphipathic alpha-helix) and capsid protein VP4 are externalized (By similarity). Together, they shape a pore in the host membrane through which viral genome is translocated to host cell cytoplasm (By similarity).</text>
</comment>
<comment type="function">
    <molecule>Capsid protein VP2</molecule>
    <text evidence="2">Forms an icosahedral capsid of pseudo T=3 symmetry with capsid proteins VP2 and VP3 (By similarity). The capsid is 300 Angstroms in diameter, composed of 60 copies of each capsid protein and enclosing the viral positive strand RNA genome (By similarity).</text>
</comment>
<comment type="function">
    <molecule>Capsid protein VP3</molecule>
    <text evidence="2">Forms an icosahedral capsid of pseudo T=3 symmetry with capsid proteins VP2 and VP3 (By similarity). The capsid is 300 Angstroms in diameter, composed of 60 copies of each capsid protein and enclosing the viral positive strand RNA genome (By similarity).</text>
</comment>
<comment type="function">
    <molecule>Capsid protein VP4</molecule>
    <text evidence="2">Lies on the inner surface of the capsid shell (By similarity). After binding to the host receptor, the capsid undergoes conformational changes (By similarity). Capsid protein VP4 is released, Capsid protein VP1 N-terminus is externalized, and together, they shape a pore in the host membrane through which the viral genome is translocated into the host cell cytoplasm (By similarity).</text>
</comment>
<comment type="function">
    <molecule>Capsid protein VP0</molecule>
    <text evidence="2">Component of immature procapsids, which is cleaved into capsid proteins VP4 and VP2 after maturation (By similarity). Allows the capsid to remain inactive before the maturation step (By similarity).</text>
</comment>
<comment type="function">
    <molecule>Protease 2A</molecule>
    <text evidence="2 5">Cysteine protease that cleaves viral polyprotein and specific host proteins (By similarity). It is responsible for the autocatalytic cleavage between the P1 and P2 regions, which is the first cleavage occurring in the polyprotein (By similarity). Also cleaves the host translation initiation factor EIF4G1, in order to shut down the capped cellular mRNA translation (By similarity). Inhibits the host nucleus-cytoplasm protein and RNA trafficking by cleaving host members of the nuclear pores (By similarity). Counteracts stress granule formation probably by antagonizing its assembly or promoting its dissassembly (By similarity). Cleaves and inhibits host IFIH1/MDA5, thereby inhibiting the type-I IFN production and the establishment of the antiviral state (By similarity). Cleaves and inhibits host MAVS, thereby inhibiting the type-I IFN production and the establishment of the antiviral state (By similarity).</text>
</comment>
<comment type="function">
    <molecule>Protein 2B</molecule>
    <text evidence="2">Plays an essential role in the virus replication cycle by acting as a viroporin. Creates a pore in the host endoplasmic reticulum and as a consequence releases Ca2+ in the cytoplasm of infected cell. In turn, high levels of cytoplasmic calcium may trigger membrane trafficking and transport of viral ER-associated proteins to viroplasms, sites of viral genome replication.</text>
</comment>
<comment type="function">
    <molecule>Protein 2C</molecule>
    <text evidence="2">Induces and associates with structural rearrangements of intracellular membranes. Displays RNA-binding, nucleotide binding and NTPase activities. May play a role in virion morphogenesis and viral RNA encapsidation by interacting with the capsid protein VP3.</text>
</comment>
<comment type="function">
    <molecule>Protein 3AB</molecule>
    <text evidence="2">Localizes the viral replication complex to the surface of membranous vesicles. Together with protein 3CD binds the Cis-Active RNA Element (CRE) which is involved in RNA synthesis initiation. Acts as a cofactor to stimulate the activity of 3D polymerase, maybe through a nucleid acid chaperone activity.</text>
</comment>
<comment type="function">
    <molecule>Protein 3A</molecule>
    <text evidence="2">Localizes the viral replication complex to the surface of membranous vesicles. It inhibits host cell endoplasmic reticulum-to-Golgi apparatus transport and causes the disassembly of the Golgi complex, possibly through GBF1 interaction (By similarity). This would result in depletion of MHC, trail receptors and IFN receptors at the host cell surface (By similarity). Plays an essential role in viral RNA replication by recruiting ACBD3 and PI4KB at the viral replication sites, thereby allowing the formation of the rearranged membranous structures where viral replication takes place (By similarity).</text>
</comment>
<comment type="function">
    <molecule>Viral protein genome-linked</molecule>
    <text evidence="2">Acts as a primer for viral RNA replication and remains covalently bound to viral genomic RNA. VPg is uridylylated prior to priming replication into VPg-pUpU. The oriI viral genomic sequence may act as a template for this. The VPg-pUpU is then used as primer on the genomic RNA poly(A) by the RNA-dependent RNA polymerase to replicate the viral genome. During genome replication, the VPg-RNA linkage is removed by the host TDP2, thereby accelerating replication. During the late stage of the replication cycle, host TDP2 is excluded from sites of viral RNA synthesis and encapsidation, allowing for the generation of progeny virions.</text>
</comment>
<comment type="function">
    <molecule>Protein 3CD</molecule>
    <text evidence="2">Involved in the viral replication complex and viral polypeptide maturation. It exhibits protease activity with a specificity and catalytic efficiency that is different from protease 3C. Protein 3CD lacks polymerase activity. Protein 3CD binds to the 5'UTR of the viral genome.</text>
</comment>
<comment type="function">
    <molecule>RNA-directed RNA polymerase</molecule>
    <text evidence="2">Replicates the viral genomic RNA on the surface of intracellular membranes. May form linear arrays of subunits that propagate along a strong head-to-tail interaction called interface-I. Covalently attaches UMP to a tyrosine of VPg, which is used to prime RNA synthesis. The positive stranded RNA genome is first replicated at virus induced membranous vesicles, creating a dsRNA genomic replication form. This dsRNA is then used as template to synthesize positive stranded RNA genomes. ss(+)RNA genomes are either translated, replicated or encapsidated.</text>
</comment>
<comment type="function">
    <molecule>Protease 3C</molecule>
    <text evidence="2 4">Major viral protease that mediates proteolytic processing of the polyprotein (By similarity). Cleaves host EIF5B, contributing to host translation shutoff (By similarity). Also cleaves host PABPC1, contributing to host translation shutoff (By similarity). Cleaves host NLRP1, triggers host N-glycine-mediated degradation of the autoinhibitory NLRP1 N-terminal fragment (By similarity).</text>
</comment>
<comment type="catalytic activity">
    <molecule>Protein 2C</molecule>
    <reaction evidence="2">
        <text>a ribonucleoside 5'-triphosphate + H2O = a ribonucleoside 5'-diphosphate + phosphate + H(+)</text>
        <dbReference type="Rhea" id="RHEA:23680"/>
        <dbReference type="ChEBI" id="CHEBI:15377"/>
        <dbReference type="ChEBI" id="CHEBI:15378"/>
        <dbReference type="ChEBI" id="CHEBI:43474"/>
        <dbReference type="ChEBI" id="CHEBI:57930"/>
        <dbReference type="ChEBI" id="CHEBI:61557"/>
        <dbReference type="EC" id="3.6.1.15"/>
    </reaction>
</comment>
<comment type="catalytic activity">
    <molecule>Protease 2A</molecule>
    <reaction evidence="2">
        <text>Selective cleavage of Tyr-|-Gly bond in the picornavirus polyprotein.</text>
        <dbReference type="EC" id="3.4.22.29"/>
    </reaction>
</comment>
<comment type="catalytic activity">
    <molecule>RNA-directed RNA polymerase</molecule>
    <reaction evidence="10">
        <text>RNA(n) + a ribonucleoside 5'-triphosphate = RNA(n+1) + diphosphate</text>
        <dbReference type="Rhea" id="RHEA:21248"/>
        <dbReference type="Rhea" id="RHEA-COMP:14527"/>
        <dbReference type="Rhea" id="RHEA-COMP:17342"/>
        <dbReference type="ChEBI" id="CHEBI:33019"/>
        <dbReference type="ChEBI" id="CHEBI:61557"/>
        <dbReference type="ChEBI" id="CHEBI:140395"/>
        <dbReference type="EC" id="2.7.7.48"/>
    </reaction>
</comment>
<comment type="catalytic activity">
    <molecule>Protease 3C</molecule>
    <reaction evidence="12">
        <text>Selective cleavage of Gln-|-Gly bond in the poliovirus polyprotein. In other picornavirus reactions Glu may be substituted for Gln, and Ser or Thr for Gly.</text>
        <dbReference type="EC" id="3.4.22.28"/>
    </reaction>
</comment>
<comment type="cofactor">
    <molecule>RNA-directed RNA polymerase</molecule>
    <cofactor evidence="2">
        <name>Mg(2+)</name>
        <dbReference type="ChEBI" id="CHEBI:18420"/>
    </cofactor>
    <text evidence="2 5">Binds 2 magnesium ions that constitute a dinuclear catalytic metal center (By similarity). The magnesium ions are not prebound but only present for catalysis (By similarity). Requires the presence of 3CDpro or 3CPro (By similarity).</text>
</comment>
<comment type="activity regulation">
    <molecule>RNA-directed RNA polymerase</molecule>
    <text evidence="2">Replication or transcription is subject to high level of random mutations by the nucleotide analog ribavirin.</text>
</comment>
<comment type="subunit">
    <molecule>Capsid protein VP0</molecule>
    <text evidence="2">Interacts with capsid protein VP1 and capsid protein VP3 to form heterotrimeric protomers.</text>
</comment>
<comment type="subunit">
    <molecule>Capsid protein VP1</molecule>
    <text evidence="2">Interacts with capsid protein VP0, and capsid protein VP3 to form heterotrimeric protomers (By similarity). Five protomers subsequently associate to form pentamers which serve as building blocks for the capsid (By similarity). Interacts with capsid protein VP2, capsid protein VP3 and capsid protein VP4 following cleavage of capsid protein VP0 (By similarity).</text>
</comment>
<comment type="subunit">
    <molecule>Capsid protein VP2</molecule>
    <text evidence="2">Interacts with capsid protein VP1 and capsid protein VP3 in the mature capsid.</text>
</comment>
<comment type="subunit">
    <molecule>Capsid protein VP3</molecule>
    <text evidence="2">Interacts with capsid protein VP0 and capsid protein VP1 to form heterotrimeric protomers (By similarity). Five protomers subsequently associate to form pentamers which serve as building blocks for the capsid (By similarity). Interacts with capsid protein VP4 in the mature capsid (By similarity). Interacts with protein 2C; this interaction may be important for virion morphogenesis (By similarity).</text>
</comment>
<comment type="subunit">
    <molecule>Capsid protein VP4</molecule>
    <text evidence="2">Interacts with capsid protein VP1 and capsid protein VP3.</text>
</comment>
<comment type="subunit">
    <molecule>Protease 2A</molecule>
    <text evidence="6">Homodimer.</text>
</comment>
<comment type="subunit">
    <molecule>Protein 2C</molecule>
    <text evidence="2">Homohexamer; forms a hexameric ring structure with 6-fold symmetry characteristic of AAA+ ATPases (By similarity). Interacts (via N-terminus) with host RTN3 (via reticulon domain); this interaction is important for viral replication (By similarity). Interacts with capsid protein VP3; this interaction may be important for virion morphogenesis (By similarity).</text>
</comment>
<comment type="subunit">
    <molecule>Protein 3AB</molecule>
    <text evidence="2">Interacts with protein 3CD.</text>
</comment>
<comment type="subunit">
    <molecule>Protein 3A</molecule>
    <text evidence="2 13">Homodimer (By similarity). Interacts with host GBF1 (By similarity). Interacts (via GOLD domain) with host ACBD3 (via GOLD domain); this interaction allows the formation of a viral protein 3A/ACBD3 heterotetramer with a 2:2 stoichiometry, which will stimulate the recruitment of host PI4KB in order to synthesize PI4P at the viral RNA replication sites (PubMed:22258260).</text>
</comment>
<comment type="subunit">
    <molecule>Viral protein genome-linked</molecule>
    <text evidence="2">Interacts with RNA-directed RNA polymerase.</text>
</comment>
<comment type="subunit">
    <molecule>Protein 3CD</molecule>
    <text evidence="2">Interacts with protein 3AB and with RNA-directed RNA polymerase.</text>
</comment>
<comment type="subunit">
    <molecule>RNA-directed RNA polymerase</molecule>
    <text evidence="2">Interacts with Viral protein genome-linked and with protein 3CD.</text>
</comment>
<comment type="subcellular location">
    <molecule>Capsid protein VP0</molecule>
    <subcellularLocation>
        <location>Virion</location>
    </subcellularLocation>
    <subcellularLocation>
        <location evidence="14">Host cytoplasm</location>
    </subcellularLocation>
</comment>
<comment type="subcellular location">
    <molecule>Capsid protein VP4</molecule>
    <subcellularLocation>
        <location>Virion</location>
    </subcellularLocation>
</comment>
<comment type="subcellular location">
    <molecule>Capsid protein VP2</molecule>
    <subcellularLocation>
        <location evidence="2">Virion</location>
    </subcellularLocation>
    <subcellularLocation>
        <location evidence="14">Host cytoplasm</location>
    </subcellularLocation>
</comment>
<comment type="subcellular location">
    <molecule>Capsid protein VP3</molecule>
    <subcellularLocation>
        <location evidence="2">Virion</location>
    </subcellularLocation>
    <subcellularLocation>
        <location evidence="14">Host cytoplasm</location>
    </subcellularLocation>
</comment>
<comment type="subcellular location">
    <molecule>Capsid protein VP1</molecule>
    <subcellularLocation>
        <location evidence="2">Virion</location>
    </subcellularLocation>
    <subcellularLocation>
        <location evidence="14">Host cytoplasm</location>
    </subcellularLocation>
</comment>
<comment type="subcellular location">
    <molecule>Protein 2B</molecule>
    <subcellularLocation>
        <location evidence="14">Host cytoplasmic vesicle membrane</location>
        <topology evidence="14">Peripheral membrane protein</topology>
        <orientation evidence="14">Cytoplasmic side</orientation>
    </subcellularLocation>
    <text>Probably localizes to the surface of intracellular membrane vesicles that are induced after virus infection as the site for viral RNA replication. These vesicles are derived from the endoplasmic reticulum.</text>
</comment>
<comment type="subcellular location">
    <molecule>Protein 2C</molecule>
    <subcellularLocation>
        <location evidence="14">Host cytoplasmic vesicle membrane</location>
        <topology evidence="14">Peripheral membrane protein</topology>
        <orientation evidence="14">Cytoplasmic side</orientation>
    </subcellularLocation>
    <text>Probably localizes to the surface of intracellular membrane vesicles that are induced after virus infection as the site for viral RNA replication. These vesicles are derived from the endoplasmic reticulum.</text>
</comment>
<comment type="subcellular location">
    <molecule>Protein 3A</molecule>
    <subcellularLocation>
        <location evidence="14">Host cytoplasmic vesicle membrane</location>
        <topology evidence="14">Peripheral membrane protein</topology>
        <orientation evidence="14">Cytoplasmic side</orientation>
    </subcellularLocation>
    <text>Probably localizes to the surface of intracellular membrane vesicles that are induced after virus infection as the site for viral RNA replication. These vesicles are derived from the endoplasmic reticulum.</text>
</comment>
<comment type="subcellular location">
    <molecule>Protein 3AB</molecule>
    <subcellularLocation>
        <location evidence="14">Host cytoplasmic vesicle membrane</location>
        <topology evidence="14">Peripheral membrane protein</topology>
        <orientation evidence="14">Cytoplasmic side</orientation>
    </subcellularLocation>
    <text>Probably localizes to the surface of intracellular membrane vesicles that are induced after virus infection as the site for viral RNA replication. These vesicles are derived from the endoplasmic reticulum.</text>
</comment>
<comment type="subcellular location">
    <molecule>Viral protein genome-linked</molecule>
    <subcellularLocation>
        <location evidence="2">Virion</location>
    </subcellularLocation>
    <subcellularLocation>
        <location evidence="7">Host cytoplasm</location>
    </subcellularLocation>
</comment>
<comment type="subcellular location">
    <molecule>Protease 3C</molecule>
    <subcellularLocation>
        <location>Host cytoplasm</location>
    </subcellularLocation>
</comment>
<comment type="subcellular location">
    <molecule>Protein 3CD</molecule>
    <subcellularLocation>
        <location evidence="2">Host nucleus</location>
    </subcellularLocation>
    <subcellularLocation>
        <location evidence="2">Host cytoplasm</location>
    </subcellularLocation>
    <subcellularLocation>
        <location evidence="14">Host cytoplasmic vesicle membrane</location>
        <topology evidence="14">Peripheral membrane protein</topology>
        <orientation evidence="14">Cytoplasmic side</orientation>
    </subcellularLocation>
    <text>Probably localizes to the surface of intracellular membrane vesicles that are induced after virus infection as the site for viral RNA replication. These vesicles are derived from the endoplasmic reticulum.</text>
</comment>
<comment type="subcellular location">
    <molecule>RNA-directed RNA polymerase</molecule>
    <subcellularLocation>
        <location evidence="14">Host cytoplasmic vesicle membrane</location>
        <topology evidence="14">Peripheral membrane protein</topology>
        <orientation evidence="14">Cytoplasmic side</orientation>
    </subcellularLocation>
    <text>Probably localizes to the surface of intracellular membrane vesicles that are induced after virus infection as the site for viral RNA replication. These vesicles are derived from the endoplasmic reticulum.</text>
</comment>
<comment type="domain">
    <molecule>Protein 2C</molecule>
    <text evidence="1 2">The N-terminus has membrane-binding (By similarity). The N-terminus also displays RNA-binding properties (By similarity). The N-terminus is involved in oligomerization (By similarity). The central part contains an ATPase domain and a degenerate C4-type zinc-finger with only 3 cysteines (By similarity). The C-terminus is involved in RNA-binding (By similarity). The extreme C-terminus contains a region involved in oligomerization (By similarity).</text>
</comment>
<comment type="PTM">
    <molecule>Genome polyprotein</molecule>
    <text evidence="2">Specific enzymatic cleavages in vivo by the viral proteases yield processing intermediates and the mature proteins.</text>
</comment>
<comment type="PTM">
    <molecule>Capsid protein VP0</molecule>
    <text evidence="2">Myristoylation is required for the formation of pentamers during virus assembly. Further assembly of 12 pentamers and a molecule of genomic RNA generates the provirion.</text>
</comment>
<comment type="PTM">
    <molecule>Capsid protein VP0</molecule>
    <text evidence="2">During virion maturation, immature virions are rendered infectious following cleavage of VP0 into VP4 and VP2. This maturation seems to be an autocatalytic event triggered by the presence of RNA in the capsid and it is followed by a conformational change infectious virion.</text>
</comment>
<comment type="PTM">
    <molecule>Capsid protein VP4</molecule>
    <text evidence="2">Myristoylation is required during RNA encapsidation and formation of the mature virus particle.</text>
</comment>
<comment type="PTM">
    <molecule>Viral protein genome-linked</molecule>
    <text evidence="2">VPg is uridylylated by the polymerase into VPg-pUpU. This acts as a nucleotide-peptide primer for the genomic RNA replication.</text>
</comment>
<comment type="similarity">
    <text evidence="14">Belongs to the picornaviruses polyprotein family.</text>
</comment>
<reference key="1">
    <citation type="journal article" date="1993" name="J. Gen. Virol.">
        <title>Complete nucleotide sequence of a coxsackie B5 virus and its relationship to swine vesicular disease virus.</title>
        <authorList>
            <person name="Zhang G."/>
            <person name="Wilsden G."/>
            <person name="Knowles N.J."/>
            <person name="McCauley J.W."/>
        </authorList>
    </citation>
    <scope>NUCLEOTIDE SEQUENCE [GENOMIC RNA]</scope>
</reference>
<reference key="2">
    <citation type="journal article" date="2012" name="J. Virol.">
        <title>The 3A protein from multiple picornaviruses utilizes the golgi adaptor protein ACBD3 to recruit PI4KIIIbeta.</title>
        <authorList>
            <person name="Greninger A.L."/>
            <person name="Knudsen G.M."/>
            <person name="Betegon M."/>
            <person name="Burlingame A.L."/>
            <person name="Derisi J.L."/>
        </authorList>
    </citation>
    <scope>INTERACTION WITH HOST ACBD3 (PROTEIN 3A)</scope>
</reference>
<sequence>MGAQVSTQKTGAHETGLRASGNSIIHYTNINYYKDAASNSANRQEFAQDPGKFTEPVKDIMIKSMPALNSPSAEECGYSDRVRSITLGNSTITTQECANVVVGYGTWPTYLKDEEATAEDQPTQPDVATCRFYTLESVMWQQSSPGWWWKFPDALSNMGLFGQNMQYHYLGRAGYTVHVQCNASKFHQGCLLVVCVPEAEMGCATLANKPDQKSLSNGETANTFDSQNTTGQTAVQANVINAGMGVGVGNLTIFPHQWINLRTNNSATIVMPYINSVPMDNMFRHNNFTLMIIPFAPLSYSTGATTYVPITVTVAPMCAEYNGLRLAGKQGLPTMLTPGSNQFLTSDDFQSPSAMPQFDVTPEMAIPGQVNNLMEIAEVDSVVPVNNTEGKVSSIEAYQIPVQSNSTNGSQVFGFPLIPGASSVLNRTLLGEILNYYTHWSGSIKLTFMFCGSAMATGKFLLAYSPPGAGAPTTRKEAMLGTHVIWDVGLQSSCVLCIPWISQTHYRYVVVDEYTAGGYITCWYQTNIVVPADTQSDCKILCFVSACNDFSVRMLKDTPFIKQDSFYQGPPGEAVERAIARVADTISSGPVNSESIPALTAAETGHTSQVVPADTMQTRHVKNYHSRSESTVENFLCRSACVYYTTYKNHGTDGDNFAYWVINTRQVAQLRRKLEMFTYARFDLELTFVITSTQEQSTIQGQDSPVLTHQIMYVPPGGPVPTKINSYSWQTSTNPSVFWTEGSAPPRISIPFISIGNAYSMFYDGWAKFDKQGTYGINTLNNMGTLYMRHVNDGSPGPIVSTVRIYFKPKHVKTWVPRPPRLCQYQKAGNVNFEPTGVTESRTEITAMQTTGVLGQQTGAICIGNYRVVNRHLATSEDWQRCVWEDYNRDLLVSTTTAHGCDTIARCRCSTGVYFCASRNKHYPVSFEGPGLVEVQESEYYPKRYQSHVLLAAGFSEPGDCGGILRCEHGVIGLVTMGGEGVVGFADVRDLLWLEDDAMEQGVKDYVEQLGNAFGSGFTNQICEQVNLLKESLVGQDSILEKSLKALVKIISALVIVVRNHDDLVTITATLALIGCTSSPWRWLKQKVSQYYGIPMAERQNNNWLKKFTEMTNACKGMEWIAVKIQKFIDWLKVKILPEVKEKHEFLNRLKQLPLLESQIATIEQSAPSQSDQEQLFSNVQYFAHYCRKYAPLYAAEAKRVFSLEKKMSNYIQFKSKCRIEPVCLLLHGSPGAGKSVATNLIGRSLAEKLNSSVYSLPPDPDHFDGYKQQAVVIMDDLCQNPDGGDISLFCQMVSSVDFVPPMAALEEKGILFTSPFVLASTNAGSINAPTVSDSRALARRFHFDMNIEVISMYSQNGKINMPMSVRTCDEECCPVNFKRCCPLVCGKAIQFIDRRTQVRYSLDMLVTEMFREYNHRHSVGATLEALFQGPPIYREIKISVAPDTPPPPAIADLLKSVDSEAVREYCREKGWLVPEINSTLQIEKHVSRAFICLQALTTFVSVAGIIYIIYKLFAGFQGAYTGMPNQKPKVPTLRQAKVQGPAFEFAVAMMKRNSSTVKTEYGEFTMLGIYDRWAVLPRHAKPGPTILMNDQEVGVVDAKELVDKDGTNLELTLLKLSRNEKFRDIRGFLAKEEVEVNEAVLAINTSKFPNMYIPVGQVTDYGFLNLGGTPTKRMLMYNFPTRAGQCGGVLMSTGKVLGIHVGGNGHQGFSAALLKHYFNDEQGEIEFIESSKEAGLPVINTPSKTKLEPSVFHQVFEGNKEPAVLRNGDPRLKANFEEAIFSKYIGNVNTHVDEYMLEAVDHYAGQLATLDISTEPMKLEDAVYGTEGLEALDLTTSAGYPYVALGIKKRDILSKKTKDLTKLKECMDKYGLNLPMVTYVKDELRSAEKVAKGKSRLIEASSLNDSVAMRQTFGNLYKTFHLNPGIVTGSAVGCDPDLFWSKIPVLLDGHLIAFDYSGYDASLSPVWFACLKLLLEKLGYTHKETNYIDYLCNSHHLYRDKHYFVRGGMPSGCSGTSIFNSMINNIIIRTLMLKVYKGIDLDQFRMIAYGDDVIASYPWPIDASLLAEAGKDYGLIMTPADKGECFNEVTWTNVTFLKRYFRADEQYPFLVHPVMPMKDIHESIRWTKDPKNTQDHVRSLCLLAWHNGEHEYEEFIKKIRSVPVGRCLTLPAFSTLRRKWLDSF</sequence>
<protein>
    <recommendedName>
        <fullName>Genome polyprotein</fullName>
    </recommendedName>
    <component>
        <recommendedName>
            <fullName>P1</fullName>
        </recommendedName>
    </component>
    <component>
        <recommendedName>
            <fullName>Capsid protein VP0</fullName>
        </recommendedName>
        <alternativeName>
            <fullName>VP4-VP2</fullName>
        </alternativeName>
    </component>
    <component>
        <recommendedName>
            <fullName>Capsid protein VP4</fullName>
        </recommendedName>
        <alternativeName>
            <fullName>P1A</fullName>
        </alternativeName>
        <alternativeName>
            <fullName>Virion protein 4</fullName>
        </alternativeName>
    </component>
    <component>
        <recommendedName>
            <fullName>Capsid protein VP2</fullName>
        </recommendedName>
        <alternativeName>
            <fullName>P1B</fullName>
        </alternativeName>
        <alternativeName>
            <fullName>Virion protein 2</fullName>
        </alternativeName>
    </component>
    <component>
        <recommendedName>
            <fullName>Capsid protein VP3</fullName>
        </recommendedName>
        <alternativeName>
            <fullName>P1C</fullName>
        </alternativeName>
        <alternativeName>
            <fullName>Virion protein 3</fullName>
        </alternativeName>
    </component>
    <component>
        <recommendedName>
            <fullName>Capsid protein VP1</fullName>
        </recommendedName>
        <alternativeName>
            <fullName>P1D</fullName>
        </alternativeName>
        <alternativeName>
            <fullName>Virion protein 1</fullName>
        </alternativeName>
    </component>
    <component>
        <recommendedName>
            <fullName>P2</fullName>
        </recommendedName>
    </component>
    <component>
        <recommendedName>
            <fullName>Protease 2A</fullName>
            <shortName>P2A</shortName>
            <ecNumber evidence="2">3.4.22.29</ecNumber>
        </recommendedName>
        <alternativeName>
            <fullName>Picornain 2A</fullName>
        </alternativeName>
        <alternativeName>
            <fullName>Protein 2A</fullName>
        </alternativeName>
    </component>
    <component>
        <recommendedName>
            <fullName>Protein 2B</fullName>
            <shortName>P2B</shortName>
        </recommendedName>
    </component>
    <component>
        <recommendedName>
            <fullName>Protein 2C</fullName>
            <shortName>P2C</shortName>
            <ecNumber evidence="2">3.6.1.15</ecNumber>
        </recommendedName>
    </component>
    <component>
        <recommendedName>
            <fullName>P3</fullName>
        </recommendedName>
    </component>
    <component>
        <recommendedName>
            <fullName>Protein 3AB</fullName>
        </recommendedName>
    </component>
    <component>
        <recommendedName>
            <fullName>Protein 3A</fullName>
            <shortName>P3A</shortName>
        </recommendedName>
    </component>
    <component>
        <recommendedName>
            <fullName>Viral protein genome-linked</fullName>
            <shortName>VPg</shortName>
        </recommendedName>
        <alternativeName>
            <fullName>Protein 3B</fullName>
            <shortName>P3B</shortName>
        </alternativeName>
    </component>
    <component>
        <recommendedName>
            <fullName>Protein 3CD</fullName>
            <ecNumber>3.4.22.28</ecNumber>
        </recommendedName>
    </component>
    <component>
        <recommendedName>
            <fullName evidence="12">Protease 3C</fullName>
            <ecNumber evidence="12">3.4.22.28</ecNumber>
        </recommendedName>
        <alternativeName>
            <fullName evidence="12">Picornain 3C</fullName>
            <shortName evidence="12">P3C</shortName>
        </alternativeName>
    </component>
    <component>
        <recommendedName>
            <fullName evidence="10">RNA-directed RNA polymerase</fullName>
            <shortName>RdRp</shortName>
            <ecNumber evidence="10">2.7.7.48</ecNumber>
        </recommendedName>
        <alternativeName>
            <fullName>3D polymerase</fullName>
            <shortName>3Dpol</shortName>
        </alternativeName>
        <alternativeName>
            <fullName>Protein 3D</fullName>
            <shortName>3D</shortName>
        </alternativeName>
    </component>
</protein>
<feature type="initiator methionine" description="Removed; by host" evidence="2">
    <location>
        <position position="1"/>
    </location>
</feature>
<feature type="chain" id="PRO_0000426326" description="Genome polyprotein">
    <location>
        <begin position="2"/>
        <end position="2185"/>
    </location>
</feature>
<feature type="chain" id="PRO_0000426327" description="P1">
    <location>
        <begin position="2"/>
        <end position="851"/>
    </location>
</feature>
<feature type="chain" id="PRO_0000426328" description="Capsid protein VP0">
    <location>
        <begin position="2"/>
        <end position="330"/>
    </location>
</feature>
<feature type="chain" id="PRO_0000426329" description="Capsid protein VP4">
    <location>
        <begin position="2"/>
        <end position="69"/>
    </location>
</feature>
<feature type="chain" id="PRO_0000426330" description="Capsid protein VP2">
    <location>
        <begin position="70"/>
        <end position="330"/>
    </location>
</feature>
<feature type="chain" id="PRO_0000426331" description="Capsid protein VP3">
    <location>
        <begin position="331"/>
        <end position="568"/>
    </location>
</feature>
<feature type="chain" id="PRO_0000426332" description="Capsid protein VP1">
    <location>
        <begin position="569"/>
        <end position="851"/>
    </location>
</feature>
<feature type="chain" id="PRO_0000426333" description="P2">
    <location>
        <begin position="852"/>
        <end position="1429"/>
    </location>
</feature>
<feature type="chain" id="PRO_0000426334" description="Protease 2A">
    <location>
        <begin position="852"/>
        <end position="1001"/>
    </location>
</feature>
<feature type="chain" id="PRO_0000039631" description="Protein 2B">
    <location>
        <begin position="1002"/>
        <end position="1100"/>
    </location>
</feature>
<feature type="chain" id="PRO_0000039632" description="Protein 2C">
    <location>
        <begin position="1101"/>
        <end position="1429"/>
    </location>
</feature>
<feature type="chain" id="PRO_0000426335" description="P3">
    <location>
        <begin position="1430"/>
        <end position="2185"/>
    </location>
</feature>
<feature type="chain" id="PRO_0000426336" description="Protein 3AB">
    <location>
        <begin position="1430"/>
        <end position="1540"/>
    </location>
</feature>
<feature type="chain" id="PRO_0000039633" description="Protein 3A">
    <location>
        <begin position="1430"/>
        <end position="1518"/>
    </location>
</feature>
<feature type="chain" id="PRO_0000426337" description="Viral protein genome-linked">
    <location>
        <begin position="1519"/>
        <end position="1540"/>
    </location>
</feature>
<feature type="chain" id="PRO_0000426338" description="Protein 3CD">
    <location>
        <begin position="1541"/>
        <end position="2185"/>
    </location>
</feature>
<feature type="chain" id="PRO_0000426339" description="Protease 3C">
    <location>
        <begin position="1541"/>
        <end position="1723"/>
    </location>
</feature>
<feature type="chain" id="PRO_0000426340" description="RNA-directed RNA polymerase">
    <location>
        <begin position="1724"/>
        <end position="2185"/>
    </location>
</feature>
<feature type="topological domain" description="Cytoplasmic" evidence="9">
    <location>
        <begin position="2"/>
        <end position="1495"/>
    </location>
</feature>
<feature type="intramembrane region" evidence="9">
    <location>
        <begin position="1496"/>
        <end position="1511"/>
    </location>
</feature>
<feature type="topological domain" description="Cytoplasmic" evidence="9">
    <location>
        <begin position="1512"/>
        <end position="2185"/>
    </location>
</feature>
<feature type="domain" description="SF3 helicase" evidence="11">
    <location>
        <begin position="1205"/>
        <end position="1361"/>
    </location>
</feature>
<feature type="domain" description="Peptidase C3" evidence="12">
    <location>
        <begin position="1541"/>
        <end position="1719"/>
    </location>
</feature>
<feature type="domain" description="RdRp catalytic" evidence="10">
    <location>
        <begin position="1950"/>
        <end position="2066"/>
    </location>
</feature>
<feature type="zinc finger region" description="C4-type; degenerate" evidence="1">
    <location>
        <begin position="1369"/>
        <end position="1386"/>
    </location>
</feature>
<feature type="region of interest" description="Amphipathic alpha-helix" evidence="9">
    <location>
        <begin position="566"/>
        <end position="582"/>
    </location>
</feature>
<feature type="region of interest" description="Oligomerization" evidence="2">
    <location>
        <begin position="1101"/>
        <end position="1239"/>
    </location>
</feature>
<feature type="region of interest" description="Membrane-binding" evidence="2">
    <location>
        <begin position="1101"/>
        <end position="1173"/>
    </location>
</feature>
<feature type="region of interest" description="RNA-binding" evidence="2">
    <location>
        <begin position="1122"/>
        <end position="1126"/>
    </location>
</feature>
<feature type="region of interest" description="RNA-binding" evidence="2">
    <location>
        <begin position="1413"/>
        <end position="1420"/>
    </location>
</feature>
<feature type="region of interest" description="Oligomerization" evidence="2">
    <location>
        <begin position="1424"/>
        <end position="1429"/>
    </location>
</feature>
<feature type="active site" description="For protease 2A activity" evidence="2">
    <location>
        <position position="872"/>
    </location>
</feature>
<feature type="active site" description="For protease 2A activity" evidence="2">
    <location>
        <position position="890"/>
    </location>
</feature>
<feature type="active site" description="For protease 2A activity" evidence="2">
    <location>
        <position position="961"/>
    </location>
</feature>
<feature type="active site" description="For protease 3C activity" evidence="12">
    <location>
        <position position="1580"/>
    </location>
</feature>
<feature type="active site" description="For protease 3C activity" evidence="12">
    <location>
        <position position="1611"/>
    </location>
</feature>
<feature type="active site" description="For protease 3C activity" evidence="12">
    <location>
        <position position="1687"/>
    </location>
</feature>
<feature type="binding site" evidence="8">
    <location>
        <position position="907"/>
    </location>
    <ligand>
        <name>Zn(2+)</name>
        <dbReference type="ChEBI" id="CHEBI:29105"/>
        <label>1</label>
        <note>structural</note>
    </ligand>
</feature>
<feature type="binding site" evidence="8">
    <location>
        <position position="909"/>
    </location>
    <ligand>
        <name>Zn(2+)</name>
        <dbReference type="ChEBI" id="CHEBI:29105"/>
        <label>1</label>
        <note>structural</note>
    </ligand>
</feature>
<feature type="binding site" evidence="8">
    <location>
        <position position="967"/>
    </location>
    <ligand>
        <name>Zn(2+)</name>
        <dbReference type="ChEBI" id="CHEBI:29105"/>
        <label>1</label>
        <note>structural</note>
    </ligand>
</feature>
<feature type="binding site" evidence="8">
    <location>
        <position position="969"/>
    </location>
    <ligand>
        <name>Zn(2+)</name>
        <dbReference type="ChEBI" id="CHEBI:29105"/>
        <label>1</label>
        <note>structural</note>
    </ligand>
</feature>
<feature type="binding site" evidence="1">
    <location>
        <position position="1369"/>
    </location>
    <ligand>
        <name>Zn(2+)</name>
        <dbReference type="ChEBI" id="CHEBI:29105"/>
        <label>2</label>
    </ligand>
</feature>
<feature type="binding site" evidence="1">
    <location>
        <position position="1381"/>
    </location>
    <ligand>
        <name>Zn(2+)</name>
        <dbReference type="ChEBI" id="CHEBI:29105"/>
        <label>2</label>
    </ligand>
</feature>
<feature type="binding site" evidence="1">
    <location>
        <position position="1386"/>
    </location>
    <ligand>
        <name>Zn(2+)</name>
        <dbReference type="ChEBI" id="CHEBI:29105"/>
        <label>2</label>
    </ligand>
</feature>
<feature type="binding site" evidence="2">
    <location>
        <position position="1956"/>
    </location>
    <ligand>
        <name>Mg(2+)</name>
        <dbReference type="ChEBI" id="CHEBI:18420"/>
        <label>1</label>
        <note>catalytic; for RdRp activity</note>
    </ligand>
</feature>
<feature type="binding site" evidence="2">
    <location>
        <position position="1956"/>
    </location>
    <ligand>
        <name>Mg(2+)</name>
        <dbReference type="ChEBI" id="CHEBI:18420"/>
        <label>2</label>
        <note>catalytic; for RdRp activity</note>
    </ligand>
</feature>
<feature type="binding site" evidence="2">
    <location>
        <position position="2052"/>
    </location>
    <ligand>
        <name>Mg(2+)</name>
        <dbReference type="ChEBI" id="CHEBI:18420"/>
        <label>1</label>
        <note>catalytic; for RdRp activity</note>
    </ligand>
</feature>
<feature type="binding site" evidence="2">
    <location>
        <position position="2052"/>
    </location>
    <ligand>
        <name>Mg(2+)</name>
        <dbReference type="ChEBI" id="CHEBI:18420"/>
        <label>2</label>
        <note>catalytic; for RdRp activity</note>
    </ligand>
</feature>
<feature type="site" description="Cleavage; by autolysis" evidence="2">
    <location>
        <begin position="69"/>
        <end position="70"/>
    </location>
</feature>
<feature type="site" description="Cleavage; by protease 3C" evidence="3">
    <location>
        <begin position="330"/>
        <end position="331"/>
    </location>
</feature>
<feature type="site" description="Cleavage; by autolysis" evidence="3">
    <location>
        <begin position="851"/>
        <end position="852"/>
    </location>
</feature>
<feature type="site" description="Cleavage; by protease 3C" evidence="3">
    <location>
        <begin position="1001"/>
        <end position="1002"/>
    </location>
</feature>
<feature type="site" description="Cleavage; by protease 3C" evidence="3">
    <location>
        <begin position="1100"/>
        <end position="1101"/>
    </location>
</feature>
<feature type="site" description="Involved in the interaction with host RTN3" evidence="7">
    <location>
        <position position="1125"/>
    </location>
</feature>
<feature type="site" description="Cleavage; by protease 3C" evidence="3">
    <location>
        <begin position="1429"/>
        <end position="1430"/>
    </location>
</feature>
<feature type="site" description="Cleavage; by protease 3C" evidence="3">
    <location>
        <begin position="1518"/>
        <end position="1519"/>
    </location>
</feature>
<feature type="site" description="Cleavage; by protease 3C" evidence="3">
    <location>
        <begin position="1540"/>
        <end position="1541"/>
    </location>
</feature>
<feature type="site" description="Cleavage; by protease 3C" evidence="3">
    <location>
        <begin position="1723"/>
        <end position="1724"/>
    </location>
</feature>
<feature type="modified residue" description="O-(5'-phospho-RNA)-tyrosine" evidence="2">
    <location>
        <position position="1521"/>
    </location>
</feature>
<feature type="lipid moiety-binding region" description="N-myristoyl glycine; by host" evidence="2">
    <location>
        <position position="2"/>
    </location>
</feature>
<accession>Q03053</accession>
<dbReference type="EC" id="3.4.22.29" evidence="2"/>
<dbReference type="EC" id="3.6.1.15" evidence="2"/>
<dbReference type="EC" id="3.4.22.28" evidence="12"/>
<dbReference type="EC" id="2.7.7.48" evidence="10"/>
<dbReference type="EMBL" id="X67706">
    <property type="protein sequence ID" value="CAA47944.1"/>
    <property type="molecule type" value="Genomic_RNA"/>
</dbReference>
<dbReference type="PIR" id="JQ2021">
    <property type="entry name" value="JQ2021"/>
</dbReference>
<dbReference type="SMR" id="Q03053"/>
<dbReference type="MEROPS" id="C03.020"/>
<dbReference type="MEROPS" id="N08.001"/>
<dbReference type="Proteomes" id="UP000000836">
    <property type="component" value="Genome"/>
</dbReference>
<dbReference type="GO" id="GO:0044162">
    <property type="term" value="C:host cell cytoplasmic vesicle membrane"/>
    <property type="evidence" value="ECO:0007669"/>
    <property type="project" value="UniProtKB-SubCell"/>
</dbReference>
<dbReference type="GO" id="GO:0042025">
    <property type="term" value="C:host cell nucleus"/>
    <property type="evidence" value="ECO:0007669"/>
    <property type="project" value="UniProtKB-SubCell"/>
</dbReference>
<dbReference type="GO" id="GO:0016020">
    <property type="term" value="C:membrane"/>
    <property type="evidence" value="ECO:0007669"/>
    <property type="project" value="UniProtKB-KW"/>
</dbReference>
<dbReference type="GO" id="GO:0039618">
    <property type="term" value="C:T=pseudo3 icosahedral viral capsid"/>
    <property type="evidence" value="ECO:0007669"/>
    <property type="project" value="UniProtKB-KW"/>
</dbReference>
<dbReference type="GO" id="GO:0005524">
    <property type="term" value="F:ATP binding"/>
    <property type="evidence" value="ECO:0007669"/>
    <property type="project" value="UniProtKB-KW"/>
</dbReference>
<dbReference type="GO" id="GO:0016887">
    <property type="term" value="F:ATP hydrolysis activity"/>
    <property type="evidence" value="ECO:0007669"/>
    <property type="project" value="InterPro"/>
</dbReference>
<dbReference type="GO" id="GO:0015267">
    <property type="term" value="F:channel activity"/>
    <property type="evidence" value="ECO:0007669"/>
    <property type="project" value="UniProtKB-KW"/>
</dbReference>
<dbReference type="GO" id="GO:0004197">
    <property type="term" value="F:cysteine-type endopeptidase activity"/>
    <property type="evidence" value="ECO:0007669"/>
    <property type="project" value="UniProtKB-EC"/>
</dbReference>
<dbReference type="GO" id="GO:0003723">
    <property type="term" value="F:RNA binding"/>
    <property type="evidence" value="ECO:0007669"/>
    <property type="project" value="UniProtKB-KW"/>
</dbReference>
<dbReference type="GO" id="GO:0003724">
    <property type="term" value="F:RNA helicase activity"/>
    <property type="evidence" value="ECO:0007669"/>
    <property type="project" value="InterPro"/>
</dbReference>
<dbReference type="GO" id="GO:0003968">
    <property type="term" value="F:RNA-directed RNA polymerase activity"/>
    <property type="evidence" value="ECO:0007669"/>
    <property type="project" value="UniProtKB-KW"/>
</dbReference>
<dbReference type="GO" id="GO:0005198">
    <property type="term" value="F:structural molecule activity"/>
    <property type="evidence" value="ECO:0007669"/>
    <property type="project" value="InterPro"/>
</dbReference>
<dbReference type="GO" id="GO:0008270">
    <property type="term" value="F:zinc ion binding"/>
    <property type="evidence" value="ECO:0007669"/>
    <property type="project" value="UniProtKB-KW"/>
</dbReference>
<dbReference type="GO" id="GO:0006260">
    <property type="term" value="P:DNA replication"/>
    <property type="evidence" value="ECO:0007669"/>
    <property type="project" value="UniProtKB-KW"/>
</dbReference>
<dbReference type="GO" id="GO:0006351">
    <property type="term" value="P:DNA-templated transcription"/>
    <property type="evidence" value="ECO:0007669"/>
    <property type="project" value="InterPro"/>
</dbReference>
<dbReference type="GO" id="GO:0075509">
    <property type="term" value="P:endocytosis involved in viral entry into host cell"/>
    <property type="evidence" value="ECO:0007669"/>
    <property type="project" value="UniProtKB-KW"/>
</dbReference>
<dbReference type="GO" id="GO:0034220">
    <property type="term" value="P:monoatomic ion transmembrane transport"/>
    <property type="evidence" value="ECO:0007669"/>
    <property type="project" value="UniProtKB-KW"/>
</dbReference>
<dbReference type="GO" id="GO:0006508">
    <property type="term" value="P:proteolysis"/>
    <property type="evidence" value="ECO:0007669"/>
    <property type="project" value="UniProtKB-KW"/>
</dbReference>
<dbReference type="GO" id="GO:0044694">
    <property type="term" value="P:symbiont genome entry into host cell via pore formation in plasma membrane"/>
    <property type="evidence" value="ECO:0007669"/>
    <property type="project" value="UniProtKB-KW"/>
</dbReference>
<dbReference type="GO" id="GO:0039520">
    <property type="term" value="P:symbiont-mediated activation of host autophagy"/>
    <property type="evidence" value="ECO:0000250"/>
    <property type="project" value="UniProtKB"/>
</dbReference>
<dbReference type="GO" id="GO:0039540">
    <property type="term" value="P:symbiont-mediated suppression of host cytoplasmic pattern recognition receptor signaling pathway via inhibition of RIG-I activity"/>
    <property type="evidence" value="ECO:0007669"/>
    <property type="project" value="UniProtKB-KW"/>
</dbReference>
<dbReference type="GO" id="GO:0039522">
    <property type="term" value="P:symbiont-mediated suppression of host mRNA export from nucleus"/>
    <property type="evidence" value="ECO:0007669"/>
    <property type="project" value="UniProtKB-KW"/>
</dbReference>
<dbReference type="GO" id="GO:0039694">
    <property type="term" value="P:viral RNA genome replication"/>
    <property type="evidence" value="ECO:0007669"/>
    <property type="project" value="InterPro"/>
</dbReference>
<dbReference type="GO" id="GO:0019062">
    <property type="term" value="P:virion attachment to host cell"/>
    <property type="evidence" value="ECO:0007669"/>
    <property type="project" value="UniProtKB-KW"/>
</dbReference>
<dbReference type="CDD" id="cd23213">
    <property type="entry name" value="Enterovirus_RdRp"/>
    <property type="match status" value="1"/>
</dbReference>
<dbReference type="CDD" id="cd00205">
    <property type="entry name" value="rhv_like"/>
    <property type="match status" value="3"/>
</dbReference>
<dbReference type="FunFam" id="1.20.960.20:FF:000001">
    <property type="entry name" value="Genome polyprotein"/>
    <property type="match status" value="1"/>
</dbReference>
<dbReference type="FunFam" id="2.40.10.10:FF:000018">
    <property type="entry name" value="Genome polyprotein"/>
    <property type="match status" value="1"/>
</dbReference>
<dbReference type="FunFam" id="2.40.10.10:FF:000020">
    <property type="entry name" value="Genome polyprotein"/>
    <property type="match status" value="1"/>
</dbReference>
<dbReference type="FunFam" id="2.40.10.10:FF:000022">
    <property type="entry name" value="Genome polyprotein"/>
    <property type="match status" value="1"/>
</dbReference>
<dbReference type="FunFam" id="2.60.120.20:FF:000001">
    <property type="entry name" value="Genome polyprotein"/>
    <property type="match status" value="1"/>
</dbReference>
<dbReference type="FunFam" id="2.60.120.20:FF:000002">
    <property type="entry name" value="Genome polyprotein"/>
    <property type="match status" value="1"/>
</dbReference>
<dbReference type="FunFam" id="2.60.120.20:FF:000004">
    <property type="entry name" value="Genome polyprotein"/>
    <property type="match status" value="1"/>
</dbReference>
<dbReference type="FunFam" id="3.30.70.270:FF:000008">
    <property type="entry name" value="Genome polyprotein"/>
    <property type="match status" value="1"/>
</dbReference>
<dbReference type="FunFam" id="4.10.80.10:FF:000001">
    <property type="entry name" value="Genome polyprotein"/>
    <property type="match status" value="1"/>
</dbReference>
<dbReference type="FunFam" id="4.10.880.10:FF:000001">
    <property type="entry name" value="Genome polyprotein"/>
    <property type="match status" value="1"/>
</dbReference>
<dbReference type="FunFam" id="4.10.880.10:FF:000002">
    <property type="entry name" value="Genome polyprotein"/>
    <property type="match status" value="1"/>
</dbReference>
<dbReference type="Gene3D" id="1.20.960.20">
    <property type="match status" value="1"/>
</dbReference>
<dbReference type="Gene3D" id="2.60.120.20">
    <property type="match status" value="3"/>
</dbReference>
<dbReference type="Gene3D" id="3.30.70.270">
    <property type="match status" value="1"/>
</dbReference>
<dbReference type="Gene3D" id="4.10.80.10">
    <property type="entry name" value="Picornavirus coat protein VP4"/>
    <property type="match status" value="1"/>
</dbReference>
<dbReference type="Gene3D" id="6.10.20.20">
    <property type="entry name" value="Poliovirus 3A protein-like"/>
    <property type="match status" value="1"/>
</dbReference>
<dbReference type="Gene3D" id="4.10.880.10">
    <property type="entry name" value="Poliovirus 3D polymerase Domain 1 (Nucleotidyltransferase)"/>
    <property type="match status" value="2"/>
</dbReference>
<dbReference type="Gene3D" id="2.40.10.10">
    <property type="entry name" value="Trypsin-like serine proteases"/>
    <property type="match status" value="4"/>
</dbReference>
<dbReference type="InterPro" id="IPR003593">
    <property type="entry name" value="AAA+_ATPase"/>
</dbReference>
<dbReference type="InterPro" id="IPR043502">
    <property type="entry name" value="DNA/RNA_pol_sf"/>
</dbReference>
<dbReference type="InterPro" id="IPR000605">
    <property type="entry name" value="Helicase_SF3_ssDNA/RNA_vir"/>
</dbReference>
<dbReference type="InterPro" id="IPR014759">
    <property type="entry name" value="Helicase_SF3_ssRNA_vir"/>
</dbReference>
<dbReference type="InterPro" id="IPR027417">
    <property type="entry name" value="P-loop_NTPase"/>
</dbReference>
<dbReference type="InterPro" id="IPR014838">
    <property type="entry name" value="P3A"/>
</dbReference>
<dbReference type="InterPro" id="IPR036203">
    <property type="entry name" value="P3A_soluble_dom"/>
</dbReference>
<dbReference type="InterPro" id="IPR044067">
    <property type="entry name" value="PCV_3C_PRO"/>
</dbReference>
<dbReference type="InterPro" id="IPR000081">
    <property type="entry name" value="Peptidase_C3"/>
</dbReference>
<dbReference type="InterPro" id="IPR000199">
    <property type="entry name" value="Peptidase_C3A/C3B_picornavir"/>
</dbReference>
<dbReference type="InterPro" id="IPR009003">
    <property type="entry name" value="Peptidase_S1_PA"/>
</dbReference>
<dbReference type="InterPro" id="IPR043504">
    <property type="entry name" value="Peptidase_S1_PA_chymotrypsin"/>
</dbReference>
<dbReference type="InterPro" id="IPR003138">
    <property type="entry name" value="Pico_P1A"/>
</dbReference>
<dbReference type="InterPro" id="IPR036988">
    <property type="entry name" value="Pico_P1A_sf"/>
</dbReference>
<dbReference type="InterPro" id="IPR002527">
    <property type="entry name" value="Pico_P2B"/>
</dbReference>
<dbReference type="InterPro" id="IPR001676">
    <property type="entry name" value="Picornavirus_capsid"/>
</dbReference>
<dbReference type="InterPro" id="IPR043128">
    <property type="entry name" value="Rev_trsase/Diguanyl_cyclase"/>
</dbReference>
<dbReference type="InterPro" id="IPR033703">
    <property type="entry name" value="Rhv-like"/>
</dbReference>
<dbReference type="InterPro" id="IPR001205">
    <property type="entry name" value="RNA-dir_pol_C"/>
</dbReference>
<dbReference type="InterPro" id="IPR007094">
    <property type="entry name" value="RNA-dir_pol_PSvirus"/>
</dbReference>
<dbReference type="InterPro" id="IPR029053">
    <property type="entry name" value="Viral_coat"/>
</dbReference>
<dbReference type="Pfam" id="PF08727">
    <property type="entry name" value="P3A"/>
    <property type="match status" value="1"/>
</dbReference>
<dbReference type="Pfam" id="PF00548">
    <property type="entry name" value="Peptidase_C3"/>
    <property type="match status" value="1"/>
</dbReference>
<dbReference type="Pfam" id="PF02226">
    <property type="entry name" value="Pico_P1A"/>
    <property type="match status" value="1"/>
</dbReference>
<dbReference type="Pfam" id="PF00947">
    <property type="entry name" value="Pico_P2A"/>
    <property type="match status" value="1"/>
</dbReference>
<dbReference type="Pfam" id="PF01552">
    <property type="entry name" value="Pico_P2B"/>
    <property type="match status" value="1"/>
</dbReference>
<dbReference type="Pfam" id="PF00680">
    <property type="entry name" value="RdRP_1"/>
    <property type="match status" value="1"/>
</dbReference>
<dbReference type="Pfam" id="PF00073">
    <property type="entry name" value="Rhv"/>
    <property type="match status" value="3"/>
</dbReference>
<dbReference type="Pfam" id="PF00910">
    <property type="entry name" value="RNA_helicase"/>
    <property type="match status" value="1"/>
</dbReference>
<dbReference type="SMART" id="SM00382">
    <property type="entry name" value="AAA"/>
    <property type="match status" value="1"/>
</dbReference>
<dbReference type="SUPFAM" id="SSF56672">
    <property type="entry name" value="DNA/RNA polymerases"/>
    <property type="match status" value="1"/>
</dbReference>
<dbReference type="SUPFAM" id="SSF52540">
    <property type="entry name" value="P-loop containing nucleoside triphosphate hydrolases"/>
    <property type="match status" value="1"/>
</dbReference>
<dbReference type="SUPFAM" id="SSF88633">
    <property type="entry name" value="Positive stranded ssRNA viruses"/>
    <property type="match status" value="2"/>
</dbReference>
<dbReference type="SUPFAM" id="SSF89043">
    <property type="entry name" value="Soluble domain of poliovirus core protein 3a"/>
    <property type="match status" value="1"/>
</dbReference>
<dbReference type="SUPFAM" id="SSF50494">
    <property type="entry name" value="Trypsin-like serine proteases"/>
    <property type="match status" value="2"/>
</dbReference>
<dbReference type="PROSITE" id="PS51874">
    <property type="entry name" value="PCV_3C_PRO"/>
    <property type="match status" value="1"/>
</dbReference>
<dbReference type="PROSITE" id="PS50507">
    <property type="entry name" value="RDRP_SSRNA_POS"/>
    <property type="match status" value="1"/>
</dbReference>
<dbReference type="PROSITE" id="PS51218">
    <property type="entry name" value="SF3_HELICASE_2"/>
    <property type="match status" value="1"/>
</dbReference>
<evidence type="ECO:0000250" key="1">
    <source>
        <dbReference type="UniProtKB" id="B9VUU3"/>
    </source>
</evidence>
<evidence type="ECO:0000250" key="2">
    <source>
        <dbReference type="UniProtKB" id="P03300"/>
    </source>
</evidence>
<evidence type="ECO:0000250" key="3">
    <source>
        <dbReference type="UniProtKB" id="P03301"/>
    </source>
</evidence>
<evidence type="ECO:0000250" key="4">
    <source>
        <dbReference type="UniProtKB" id="P03303"/>
    </source>
</evidence>
<evidence type="ECO:0000250" key="5">
    <source>
        <dbReference type="UniProtKB" id="P03313"/>
    </source>
</evidence>
<evidence type="ECO:0000250" key="6">
    <source>
        <dbReference type="UniProtKB" id="P04936"/>
    </source>
</evidence>
<evidence type="ECO:0000250" key="7">
    <source>
        <dbReference type="UniProtKB" id="Q66478"/>
    </source>
</evidence>
<evidence type="ECO:0000250" key="8">
    <source>
        <dbReference type="UniProtKB" id="Q9QF31"/>
    </source>
</evidence>
<evidence type="ECO:0000255" key="9"/>
<evidence type="ECO:0000255" key="10">
    <source>
        <dbReference type="PROSITE-ProRule" id="PRU00539"/>
    </source>
</evidence>
<evidence type="ECO:0000255" key="11">
    <source>
        <dbReference type="PROSITE-ProRule" id="PRU00551"/>
    </source>
</evidence>
<evidence type="ECO:0000255" key="12">
    <source>
        <dbReference type="PROSITE-ProRule" id="PRU01222"/>
    </source>
</evidence>
<evidence type="ECO:0000269" key="13">
    <source>
    </source>
</evidence>
<evidence type="ECO:0000305" key="14"/>